<gene>
    <name type="primary">Serpina3k</name>
    <name type="synonym">Mcm2</name>
    <name type="synonym">Spi2</name>
</gene>
<feature type="signal peptide" evidence="6">
    <location>
        <begin position="1"/>
        <end position="21"/>
    </location>
</feature>
<feature type="chain" id="PRO_0000032417" description="Serine protease inhibitor A3K">
    <location>
        <begin position="22"/>
        <end position="418"/>
    </location>
</feature>
<feature type="region of interest" description="RCL">
    <location>
        <begin position="369"/>
        <end position="394"/>
    </location>
</feature>
<feature type="site" description="Reactive bond">
    <location>
        <begin position="384"/>
        <end position="385"/>
    </location>
</feature>
<feature type="glycosylation site" description="N-linked (GlcNAc...) asparagine" evidence="2">
    <location>
        <position position="39"/>
    </location>
</feature>
<feature type="glycosylation site" description="N-linked (GlcNAc...) asparagine" evidence="2">
    <location>
        <position position="105"/>
    </location>
</feature>
<feature type="glycosylation site" description="N-linked (GlcNAc...) asparagine" evidence="4 5">
    <location>
        <position position="185"/>
    </location>
</feature>
<feature type="glycosylation site" description="N-linked (GlcNAc...) asparagine" evidence="4 5">
    <location>
        <position position="270"/>
    </location>
</feature>
<feature type="sequence conflict" description="In Ref. 5; AAH19802/AAH11217/AAH16407." evidence="9" ref="5">
    <original>I</original>
    <variation>V</variation>
    <location>
        <position position="15"/>
    </location>
</feature>
<feature type="sequence conflict" description="In Ref. 3; CAA40106 and 4; BAE28874." evidence="9" ref="3 4">
    <original>PDT</original>
    <variation>QDK</variation>
    <location>
        <begin position="68"/>
        <end position="70"/>
    </location>
</feature>
<feature type="sequence conflict" description="In Ref. 5; AAH16407." evidence="9" ref="5">
    <original>I</original>
    <variation>F</variation>
    <location>
        <position position="72"/>
    </location>
</feature>
<feature type="sequence conflict" description="In Ref. 2; CAA38948." evidence="9" ref="2">
    <original>A</original>
    <variation>R</variation>
    <location>
        <position position="84"/>
    </location>
</feature>
<feature type="sequence conflict" description="In Ref. 3; CAA40106 and 4; BAE28874." evidence="9" ref="3 4">
    <original>E</original>
    <variation>K</variation>
    <location>
        <position position="193"/>
    </location>
</feature>
<feature type="sequence conflict" description="In Ref. 3; CAA40106 and 4; BAE28874." evidence="9" ref="3 4">
    <original>ER</original>
    <variation>DG</variation>
    <location>
        <begin position="200"/>
        <end position="201"/>
    </location>
</feature>
<feature type="sequence conflict" description="In Ref. 6; CAA25458." evidence="9" ref="6">
    <original>M</original>
    <variation>V</variation>
    <location>
        <position position="204"/>
    </location>
</feature>
<feature type="sequence conflict" description="In Ref. 3; CAA40106 and 4; BAE28874." evidence="9" ref="3 4">
    <original>T</original>
    <variation>A</variation>
    <location>
        <position position="250"/>
    </location>
</feature>
<feature type="sequence conflict" description="In Ref. 3; CAA40106 and 4; BAE28874." evidence="9" ref="3 4">
    <original>P</original>
    <variation>S</variation>
    <location>
        <position position="304"/>
    </location>
</feature>
<feature type="sequence conflict" description="In Ref. 3; CAA40106 and 4; BAE28874." evidence="9" ref="3 4">
    <original>N</original>
    <variation>D</variation>
    <location>
        <position position="320"/>
    </location>
</feature>
<feature type="sequence conflict" description="In Ref. 6; CAA25458." evidence="9" ref="6">
    <original>T</original>
    <variation>I</variation>
    <location>
        <position position="347"/>
    </location>
</feature>
<feature type="sequence conflict" description="In Ref. 3; CAA40106 and 4; BAE28874." evidence="9" ref="3 4">
    <original>T</original>
    <variation>A</variation>
    <location>
        <position position="349"/>
    </location>
</feature>
<feature type="sequence conflict" description="In Ref. 3; CAA40106 and 4; BAE28874." evidence="9" ref="3 4">
    <original>I</original>
    <variation>V</variation>
    <location>
        <position position="386"/>
    </location>
</feature>
<feature type="sequence conflict" description="In Ref. 5; AAH19802." evidence="9" ref="5">
    <original>A</original>
    <variation>G</variation>
    <location>
        <position position="389"/>
    </location>
</feature>
<feature type="sequence conflict" description="In Ref. 3; CAA40106 and 4; BAE28874." evidence="9" ref="3 4">
    <original>H</original>
    <variation>C</variation>
    <location>
        <position position="391"/>
    </location>
</feature>
<feature type="sequence conflict" description="In Ref. 3; CAA40106 and 4; BAE28874." evidence="9" ref="3 4">
    <original>F</original>
    <variation>I</variation>
    <location>
        <position position="398"/>
    </location>
</feature>
<sequence>MAFIVAMGMILMAGICPAVLCFPDGTKEMDIVFHEHQDNGTQDDSLTLASVNTDFAFSLYKKLALKNPDTNIVFSPLSISAALALVSLGAKGKTMEEILEGLKFNLTETPEADIHQGFGNLLQSLSQPEDQDQINIGNAMFIEKDLQILAEFHEKTRALYQTEAFTADFQQPTEAKNLINDYVSNQTQGMIKELISELDERTLMVLVNYIYFKGKWKISFDPQDTFESEFYLDEKRSVKVPMMKMKLLTTRHFRDEELSCSVLELKYTGNASALLILPDQGRMQQVEASLQPETLRKWRKTLFPSQIEELNLPKFSIASNYRLEEDVLPEMGIKEVFTEQADLSGITETKKLSVSQVVHKAVLDVAETGTEAAAATGVIGGIRKAILPAVHFNRPFLFVIYHTSAQSILFMAKVNNPK</sequence>
<accession>P07759</accession>
<accession>Q62257</accession>
<accession>Q8VCH3</accession>
<accession>Q91W80</accession>
<accession>Q91X80</accession>
<organism>
    <name type="scientific">Mus musculus</name>
    <name type="common">Mouse</name>
    <dbReference type="NCBI Taxonomy" id="10090"/>
    <lineage>
        <taxon>Eukaryota</taxon>
        <taxon>Metazoa</taxon>
        <taxon>Chordata</taxon>
        <taxon>Craniata</taxon>
        <taxon>Vertebrata</taxon>
        <taxon>Euteleostomi</taxon>
        <taxon>Mammalia</taxon>
        <taxon>Eutheria</taxon>
        <taxon>Euarchontoglires</taxon>
        <taxon>Glires</taxon>
        <taxon>Rodentia</taxon>
        <taxon>Myomorpha</taxon>
        <taxon>Muroidea</taxon>
        <taxon>Muridae</taxon>
        <taxon>Murinae</taxon>
        <taxon>Mus</taxon>
        <taxon>Mus</taxon>
    </lineage>
</organism>
<evidence type="ECO:0000250" key="1"/>
<evidence type="ECO:0000255" key="2"/>
<evidence type="ECO:0000269" key="3">
    <source>
    </source>
</evidence>
<evidence type="ECO:0000269" key="4">
    <source>
    </source>
</evidence>
<evidence type="ECO:0000269" key="5">
    <source>
    </source>
</evidence>
<evidence type="ECO:0000269" key="6">
    <source>
    </source>
</evidence>
<evidence type="ECO:0000269" key="7">
    <source>
    </source>
</evidence>
<evidence type="ECO:0000269" key="8">
    <source>
    </source>
</evidence>
<evidence type="ECO:0000305" key="9"/>
<dbReference type="EMBL" id="D00725">
    <property type="protein sequence ID" value="BAA00627.1"/>
    <property type="molecule type" value="mRNA"/>
</dbReference>
<dbReference type="EMBL" id="X55147">
    <property type="protein sequence ID" value="CAA38948.1"/>
    <property type="molecule type" value="mRNA"/>
</dbReference>
<dbReference type="EMBL" id="X56786">
    <property type="protein sequence ID" value="CAA40106.1"/>
    <property type="molecule type" value="mRNA"/>
</dbReference>
<dbReference type="EMBL" id="AK149436">
    <property type="protein sequence ID" value="BAE28874.1"/>
    <property type="molecule type" value="mRNA"/>
</dbReference>
<dbReference type="EMBL" id="BC011217">
    <property type="protein sequence ID" value="AAH11217.1"/>
    <property type="molecule type" value="mRNA"/>
</dbReference>
<dbReference type="EMBL" id="BC016407">
    <property type="protein sequence ID" value="AAH16407.1"/>
    <property type="molecule type" value="mRNA"/>
</dbReference>
<dbReference type="EMBL" id="BC019802">
    <property type="protein sequence ID" value="AAH19802.1"/>
    <property type="molecule type" value="mRNA"/>
</dbReference>
<dbReference type="EMBL" id="X00946">
    <property type="protein sequence ID" value="CAA25458.1"/>
    <property type="molecule type" value="Genomic_DNA"/>
</dbReference>
<dbReference type="CCDS" id="CCDS36537.1"/>
<dbReference type="PIR" id="JX0129">
    <property type="entry name" value="JX0129"/>
</dbReference>
<dbReference type="RefSeq" id="NP_035588.2">
    <property type="nucleotide sequence ID" value="NM_011458.2"/>
</dbReference>
<dbReference type="SMR" id="P07759"/>
<dbReference type="BioGRID" id="203440">
    <property type="interactions" value="7"/>
</dbReference>
<dbReference type="FunCoup" id="P07759">
    <property type="interactions" value="277"/>
</dbReference>
<dbReference type="IntAct" id="P07759">
    <property type="interactions" value="2"/>
</dbReference>
<dbReference type="STRING" id="10090.ENSMUSP00000042095"/>
<dbReference type="MEROPS" id="I04.029"/>
<dbReference type="GlyConnect" id="781">
    <property type="glycosylation" value="3 N-Linked glycans (2 sites)"/>
</dbReference>
<dbReference type="GlyCosmos" id="P07759">
    <property type="glycosylation" value="4 sites, 5 glycans"/>
</dbReference>
<dbReference type="GlyGen" id="P07759">
    <property type="glycosylation" value="5 sites, 9 N-linked glycans (3 sites), 1 O-linked glycan (1 site)"/>
</dbReference>
<dbReference type="iPTMnet" id="P07759"/>
<dbReference type="PhosphoSitePlus" id="P07759"/>
<dbReference type="SwissPalm" id="P07759"/>
<dbReference type="CPTAC" id="non-CPTAC-4063"/>
<dbReference type="jPOST" id="P07759"/>
<dbReference type="PaxDb" id="10090-ENSMUSP00000042095"/>
<dbReference type="PeptideAtlas" id="P07759"/>
<dbReference type="ProteomicsDB" id="263306"/>
<dbReference type="DNASU" id="20714"/>
<dbReference type="GeneID" id="20714"/>
<dbReference type="KEGG" id="mmu:20714"/>
<dbReference type="UCSC" id="uc007oxd.1">
    <property type="organism name" value="mouse"/>
</dbReference>
<dbReference type="AGR" id="MGI:98377"/>
<dbReference type="CTD" id="20714"/>
<dbReference type="MGI" id="MGI:98377">
    <property type="gene designation" value="Serpina3k"/>
</dbReference>
<dbReference type="eggNOG" id="KOG2392">
    <property type="taxonomic scope" value="Eukaryota"/>
</dbReference>
<dbReference type="InParanoid" id="P07759"/>
<dbReference type="OrthoDB" id="671595at2759"/>
<dbReference type="PhylomeDB" id="P07759"/>
<dbReference type="TreeFam" id="TF343201"/>
<dbReference type="BioGRID-ORCS" id="20714">
    <property type="hits" value="1 hit in 76 CRISPR screens"/>
</dbReference>
<dbReference type="ChiTaRS" id="Serpina3k">
    <property type="organism name" value="mouse"/>
</dbReference>
<dbReference type="PRO" id="PR:P07759"/>
<dbReference type="Proteomes" id="UP000000589">
    <property type="component" value="Unplaced"/>
</dbReference>
<dbReference type="RNAct" id="P07759">
    <property type="molecule type" value="protein"/>
</dbReference>
<dbReference type="GO" id="GO:0062023">
    <property type="term" value="C:collagen-containing extracellular matrix"/>
    <property type="evidence" value="ECO:0007005"/>
    <property type="project" value="BHF-UCL"/>
</dbReference>
<dbReference type="GO" id="GO:0005615">
    <property type="term" value="C:extracellular space"/>
    <property type="evidence" value="ECO:0007669"/>
    <property type="project" value="InterPro"/>
</dbReference>
<dbReference type="GO" id="GO:0004867">
    <property type="term" value="F:serine-type endopeptidase inhibitor activity"/>
    <property type="evidence" value="ECO:0007669"/>
    <property type="project" value="UniProtKB-KW"/>
</dbReference>
<dbReference type="GO" id="GO:0034097">
    <property type="term" value="P:response to cytokine"/>
    <property type="evidence" value="ECO:0000314"/>
    <property type="project" value="MGI"/>
</dbReference>
<dbReference type="GO" id="GO:0043434">
    <property type="term" value="P:response to peptide hormone"/>
    <property type="evidence" value="ECO:0000314"/>
    <property type="project" value="MGI"/>
</dbReference>
<dbReference type="CDD" id="cd19551">
    <property type="entry name" value="serpinA3_A1AC"/>
    <property type="match status" value="1"/>
</dbReference>
<dbReference type="FunFam" id="3.30.497.10:FF:000001">
    <property type="entry name" value="Serine protease inhibitor"/>
    <property type="match status" value="1"/>
</dbReference>
<dbReference type="FunFam" id="2.30.39.10:FF:000002">
    <property type="entry name" value="Serpin family D member 1"/>
    <property type="match status" value="1"/>
</dbReference>
<dbReference type="Gene3D" id="2.30.39.10">
    <property type="entry name" value="Alpha-1-antitrypsin, domain 1"/>
    <property type="match status" value="1"/>
</dbReference>
<dbReference type="Gene3D" id="3.30.497.10">
    <property type="entry name" value="Antithrombin, subunit I, domain 2"/>
    <property type="match status" value="1"/>
</dbReference>
<dbReference type="InterPro" id="IPR023795">
    <property type="entry name" value="Serpin_CS"/>
</dbReference>
<dbReference type="InterPro" id="IPR023796">
    <property type="entry name" value="Serpin_dom"/>
</dbReference>
<dbReference type="InterPro" id="IPR000215">
    <property type="entry name" value="Serpin_fam"/>
</dbReference>
<dbReference type="InterPro" id="IPR036186">
    <property type="entry name" value="Serpin_sf"/>
</dbReference>
<dbReference type="InterPro" id="IPR042178">
    <property type="entry name" value="Serpin_sf_1"/>
</dbReference>
<dbReference type="InterPro" id="IPR042185">
    <property type="entry name" value="Serpin_sf_2"/>
</dbReference>
<dbReference type="PANTHER" id="PTHR11461:SF195">
    <property type="entry name" value="SERINE PROTEASE INHIBITOR A3A-RELATED"/>
    <property type="match status" value="1"/>
</dbReference>
<dbReference type="PANTHER" id="PTHR11461">
    <property type="entry name" value="SERINE PROTEASE INHIBITOR, SERPIN"/>
    <property type="match status" value="1"/>
</dbReference>
<dbReference type="Pfam" id="PF00079">
    <property type="entry name" value="Serpin"/>
    <property type="match status" value="1"/>
</dbReference>
<dbReference type="SMART" id="SM00093">
    <property type="entry name" value="SERPIN"/>
    <property type="match status" value="1"/>
</dbReference>
<dbReference type="SUPFAM" id="SSF56574">
    <property type="entry name" value="Serpins"/>
    <property type="match status" value="1"/>
</dbReference>
<dbReference type="PROSITE" id="PS00284">
    <property type="entry name" value="SERPIN"/>
    <property type="match status" value="1"/>
</dbReference>
<comment type="function">
    <text evidence="7 8">Contrapsin inhibits trypsin-like proteases.</text>
</comment>
<comment type="subcellular location">
    <subcellularLocation>
        <location>Secreted</location>
    </subcellularLocation>
</comment>
<comment type="tissue specificity">
    <text evidence="3 6 7 8">Expressed in liver and secreted in plasma.</text>
</comment>
<comment type="domain">
    <text evidence="1">The reactive center loop (RCL) extends out from the body of the protein and directs binding to the target protease. The protease cleaves the serpin at the reactive site within the RCL, establishing a covalent linkage between the serpin reactive site and the protease. The resulting inactive serpin-protease complex is highly stable (By similarity). Variability within the reactive center loop (RCL) sequences of Serpina3 paralogs may determine target protease specificity.</text>
</comment>
<comment type="miscellaneous">
    <text>The single human alpha1-antichymotrypsin gene (SERPINA3) is represented by a cluster of 14 individual murine paralogs.</text>
</comment>
<comment type="similarity">
    <text evidence="9">Belongs to the serpin family.</text>
</comment>
<name>SPA3K_MOUSE</name>
<proteinExistence type="evidence at protein level"/>
<reference key="1">
    <citation type="journal article" date="1990" name="J. Biochem.">
        <title>Molecular cloning and sequence analysis of full-length cDNA coding for mouse contrapsin.</title>
        <authorList>
            <person name="Suzuki Y."/>
            <person name="Yamamoto K."/>
            <person name="Sinohara H."/>
        </authorList>
    </citation>
    <scope>NUCLEOTIDE SEQUENCE [MRNA]</scope>
</reference>
<reference key="2">
    <citation type="journal article" date="1991" name="Biochem. J.">
        <title>Cloning, structure and expression of cDNA for mouse contrapsin and a related protein.</title>
        <authorList>
            <person name="Ohkubo K."/>
            <person name="Ogata S."/>
            <person name="Misumi Y."/>
            <person name="Takami N."/>
            <person name="Sinohara H."/>
            <person name="Ikehara Y."/>
        </authorList>
    </citation>
    <scope>NUCLEOTIDE SEQUENCE [MRNA]</scope>
    <scope>PROTEIN SEQUENCE OF 22-41; 67-83; 156-176; 218-227; 229-235 AND 315-334</scope>
    <scope>TISSUE SPECIFICITY</scope>
    <source>
        <tissue>Liver</tissue>
    </source>
</reference>
<reference key="3">
    <citation type="journal article" date="2001" name="DNA Seq.">
        <title>Molecular cloning and sequence analysis of C57BL/6 mouse contrapsin cDNA.</title>
        <authorList>
            <person name="Yoshida K."/>
            <person name="Suzuki Y."/>
            <person name="Sinohara H."/>
        </authorList>
    </citation>
    <scope>NUCLEOTIDE SEQUENCE [MRNA]</scope>
    <source>
        <strain>C57BL/6J</strain>
    </source>
</reference>
<reference key="4">
    <citation type="journal article" date="2005" name="Science">
        <title>The transcriptional landscape of the mammalian genome.</title>
        <authorList>
            <person name="Carninci P."/>
            <person name="Kasukawa T."/>
            <person name="Katayama S."/>
            <person name="Gough J."/>
            <person name="Frith M.C."/>
            <person name="Maeda N."/>
            <person name="Oyama R."/>
            <person name="Ravasi T."/>
            <person name="Lenhard B."/>
            <person name="Wells C."/>
            <person name="Kodzius R."/>
            <person name="Shimokawa K."/>
            <person name="Bajic V.B."/>
            <person name="Brenner S.E."/>
            <person name="Batalov S."/>
            <person name="Forrest A.R."/>
            <person name="Zavolan M."/>
            <person name="Davis M.J."/>
            <person name="Wilming L.G."/>
            <person name="Aidinis V."/>
            <person name="Allen J.E."/>
            <person name="Ambesi-Impiombato A."/>
            <person name="Apweiler R."/>
            <person name="Aturaliya R.N."/>
            <person name="Bailey T.L."/>
            <person name="Bansal M."/>
            <person name="Baxter L."/>
            <person name="Beisel K.W."/>
            <person name="Bersano T."/>
            <person name="Bono H."/>
            <person name="Chalk A.M."/>
            <person name="Chiu K.P."/>
            <person name="Choudhary V."/>
            <person name="Christoffels A."/>
            <person name="Clutterbuck D.R."/>
            <person name="Crowe M.L."/>
            <person name="Dalla E."/>
            <person name="Dalrymple B.P."/>
            <person name="de Bono B."/>
            <person name="Della Gatta G."/>
            <person name="di Bernardo D."/>
            <person name="Down T."/>
            <person name="Engstrom P."/>
            <person name="Fagiolini M."/>
            <person name="Faulkner G."/>
            <person name="Fletcher C.F."/>
            <person name="Fukushima T."/>
            <person name="Furuno M."/>
            <person name="Futaki S."/>
            <person name="Gariboldi M."/>
            <person name="Georgii-Hemming P."/>
            <person name="Gingeras T.R."/>
            <person name="Gojobori T."/>
            <person name="Green R.E."/>
            <person name="Gustincich S."/>
            <person name="Harbers M."/>
            <person name="Hayashi Y."/>
            <person name="Hensch T.K."/>
            <person name="Hirokawa N."/>
            <person name="Hill D."/>
            <person name="Huminiecki L."/>
            <person name="Iacono M."/>
            <person name="Ikeo K."/>
            <person name="Iwama A."/>
            <person name="Ishikawa T."/>
            <person name="Jakt M."/>
            <person name="Kanapin A."/>
            <person name="Katoh M."/>
            <person name="Kawasawa Y."/>
            <person name="Kelso J."/>
            <person name="Kitamura H."/>
            <person name="Kitano H."/>
            <person name="Kollias G."/>
            <person name="Krishnan S.P."/>
            <person name="Kruger A."/>
            <person name="Kummerfeld S.K."/>
            <person name="Kurochkin I.V."/>
            <person name="Lareau L.F."/>
            <person name="Lazarevic D."/>
            <person name="Lipovich L."/>
            <person name="Liu J."/>
            <person name="Liuni S."/>
            <person name="McWilliam S."/>
            <person name="Madan Babu M."/>
            <person name="Madera M."/>
            <person name="Marchionni L."/>
            <person name="Matsuda H."/>
            <person name="Matsuzawa S."/>
            <person name="Miki H."/>
            <person name="Mignone F."/>
            <person name="Miyake S."/>
            <person name="Morris K."/>
            <person name="Mottagui-Tabar S."/>
            <person name="Mulder N."/>
            <person name="Nakano N."/>
            <person name="Nakauchi H."/>
            <person name="Ng P."/>
            <person name="Nilsson R."/>
            <person name="Nishiguchi S."/>
            <person name="Nishikawa S."/>
            <person name="Nori F."/>
            <person name="Ohara O."/>
            <person name="Okazaki Y."/>
            <person name="Orlando V."/>
            <person name="Pang K.C."/>
            <person name="Pavan W.J."/>
            <person name="Pavesi G."/>
            <person name="Pesole G."/>
            <person name="Petrovsky N."/>
            <person name="Piazza S."/>
            <person name="Reed J."/>
            <person name="Reid J.F."/>
            <person name="Ring B.Z."/>
            <person name="Ringwald M."/>
            <person name="Rost B."/>
            <person name="Ruan Y."/>
            <person name="Salzberg S.L."/>
            <person name="Sandelin A."/>
            <person name="Schneider C."/>
            <person name="Schoenbach C."/>
            <person name="Sekiguchi K."/>
            <person name="Semple C.A."/>
            <person name="Seno S."/>
            <person name="Sessa L."/>
            <person name="Sheng Y."/>
            <person name="Shibata Y."/>
            <person name="Shimada H."/>
            <person name="Shimada K."/>
            <person name="Silva D."/>
            <person name="Sinclair B."/>
            <person name="Sperling S."/>
            <person name="Stupka E."/>
            <person name="Sugiura K."/>
            <person name="Sultana R."/>
            <person name="Takenaka Y."/>
            <person name="Taki K."/>
            <person name="Tammoja K."/>
            <person name="Tan S.L."/>
            <person name="Tang S."/>
            <person name="Taylor M.S."/>
            <person name="Tegner J."/>
            <person name="Teichmann S.A."/>
            <person name="Ueda H.R."/>
            <person name="van Nimwegen E."/>
            <person name="Verardo R."/>
            <person name="Wei C.L."/>
            <person name="Yagi K."/>
            <person name="Yamanishi H."/>
            <person name="Zabarovsky E."/>
            <person name="Zhu S."/>
            <person name="Zimmer A."/>
            <person name="Hide W."/>
            <person name="Bult C."/>
            <person name="Grimmond S.M."/>
            <person name="Teasdale R.D."/>
            <person name="Liu E.T."/>
            <person name="Brusic V."/>
            <person name="Quackenbush J."/>
            <person name="Wahlestedt C."/>
            <person name="Mattick J.S."/>
            <person name="Hume D.A."/>
            <person name="Kai C."/>
            <person name="Sasaki D."/>
            <person name="Tomaru Y."/>
            <person name="Fukuda S."/>
            <person name="Kanamori-Katayama M."/>
            <person name="Suzuki M."/>
            <person name="Aoki J."/>
            <person name="Arakawa T."/>
            <person name="Iida J."/>
            <person name="Imamura K."/>
            <person name="Itoh M."/>
            <person name="Kato T."/>
            <person name="Kawaji H."/>
            <person name="Kawagashira N."/>
            <person name="Kawashima T."/>
            <person name="Kojima M."/>
            <person name="Kondo S."/>
            <person name="Konno H."/>
            <person name="Nakano K."/>
            <person name="Ninomiya N."/>
            <person name="Nishio T."/>
            <person name="Okada M."/>
            <person name="Plessy C."/>
            <person name="Shibata K."/>
            <person name="Shiraki T."/>
            <person name="Suzuki S."/>
            <person name="Tagami M."/>
            <person name="Waki K."/>
            <person name="Watahiki A."/>
            <person name="Okamura-Oho Y."/>
            <person name="Suzuki H."/>
            <person name="Kawai J."/>
            <person name="Hayashizaki Y."/>
        </authorList>
    </citation>
    <scope>NUCLEOTIDE SEQUENCE [LARGE SCALE MRNA]</scope>
    <source>
        <strain>C57BL/6J</strain>
        <tissue>Liver</tissue>
    </source>
</reference>
<reference key="5">
    <citation type="journal article" date="2004" name="Genome Res.">
        <title>The status, quality, and expansion of the NIH full-length cDNA project: the Mammalian Gene Collection (MGC).</title>
        <authorList>
            <consortium name="The MGC Project Team"/>
        </authorList>
    </citation>
    <scope>NUCLEOTIDE SEQUENCE [LARGE SCALE MRNA]</scope>
    <source>
        <strain>FVB/N</strain>
        <tissue>Liver</tissue>
    </source>
</reference>
<reference key="6">
    <citation type="journal article" date="1984" name="Nature">
        <title>Plasma protease inhibitors in mouse and man: divergence within the reactive centre regions.</title>
        <authorList>
            <person name="Hill R.E."/>
            <person name="Shaw P.H."/>
            <person name="Boyd P.A."/>
            <person name="Baumann H."/>
            <person name="Hastie N.D."/>
        </authorList>
    </citation>
    <scope>NUCLEOTIDE SEQUENCE [GENOMIC DNA] OF 204-418</scope>
</reference>
<reference key="7">
    <citation type="journal article" date="1982" name="Thromb. Res.">
        <title>Mouse plasma trypsin inhibitors: inhibitory spectrum of contrapsin and alpha-1-antitrypsin.</title>
        <authorList>
            <person name="Takahara H."/>
            <person name="Sinohara H."/>
        </authorList>
    </citation>
    <scope>FUNCTION</scope>
    <scope>TISSUE SPECIFICITY</scope>
</reference>
<reference key="8">
    <citation type="journal article" date="1983" name="J. Biochem.">
        <title>Inhibitory spectrum of mouse contrapsin and alpha-1-antitrypsin against mouse serine proteases.</title>
        <authorList>
            <person name="Takahara H."/>
            <person name="Sinohara H."/>
        </authorList>
    </citation>
    <scope>FUNCTION</scope>
    <scope>TISSUE SPECIFICITY</scope>
</reference>
<reference key="9">
    <citation type="journal article" date="2003" name="Genomics">
        <title>A review and comparison of the murine alpha1-antitrypsin and alpha1-antichymotrypsin multigene clusters with the human clade A serpins.</title>
        <authorList>
            <person name="Forsyth S."/>
            <person name="Horvath A."/>
            <person name="Coughlin P."/>
        </authorList>
    </citation>
    <scope>GENE FAMILY</scope>
    <scope>NOMENCLATURE</scope>
</reference>
<reference key="10">
    <citation type="journal article" date="2004" name="J. Mol. Evol.">
        <title>Expression patterns of murine antichymotrypsin-like genes reflect evolutionary divergence at the Serpina3 locus.</title>
        <authorList>
            <person name="Horvath A.J."/>
            <person name="Forsyth S.L."/>
            <person name="Coughlin P.B."/>
        </authorList>
    </citation>
    <scope>TISSUE SPECIFICITY</scope>
    <scope>REGION RCL</scope>
</reference>
<reference key="11">
    <citation type="journal article" date="2006" name="J. Proteome Res.">
        <title>Proteome-wide characterization of N-glycosylation events by diagonal chromatography.</title>
        <authorList>
            <person name="Ghesquiere B."/>
            <person name="Van Damme J."/>
            <person name="Martens L."/>
            <person name="Vandekerckhove J."/>
            <person name="Gevaert K."/>
        </authorList>
    </citation>
    <scope>GLYCOSYLATION [LARGE SCALE ANALYSIS] AT ASN-185 AND ASN-270</scope>
    <source>
        <strain>C57BL/6J</strain>
        <tissue>Plasma</tissue>
    </source>
</reference>
<reference key="12">
    <citation type="journal article" date="2007" name="J. Proteome Res.">
        <title>Enhanced analysis of the mouse plasma proteome using cysteine-containing tryptic glycopeptides.</title>
        <authorList>
            <person name="Bernhard O.K."/>
            <person name="Kapp E.A."/>
            <person name="Simpson R.J."/>
        </authorList>
    </citation>
    <scope>GLYCOSYLATION [LARGE SCALE ANALYSIS] AT ASN-185 AND ASN-270</scope>
    <source>
        <strain>C57BL/6J</strain>
        <tissue>Plasma</tissue>
    </source>
</reference>
<reference key="13">
    <citation type="journal article" date="2010" name="Cell">
        <title>A tissue-specific atlas of mouse protein phosphorylation and expression.</title>
        <authorList>
            <person name="Huttlin E.L."/>
            <person name="Jedrychowski M.P."/>
            <person name="Elias J.E."/>
            <person name="Goswami T."/>
            <person name="Rad R."/>
            <person name="Beausoleil S.A."/>
            <person name="Villen J."/>
            <person name="Haas W."/>
            <person name="Sowa M.E."/>
            <person name="Gygi S.P."/>
        </authorList>
    </citation>
    <scope>IDENTIFICATION BY MASS SPECTROMETRY [LARGE SCALE ANALYSIS]</scope>
    <source>
        <tissue>Brain</tissue>
        <tissue>Brown adipose tissue</tissue>
        <tissue>Heart</tissue>
        <tissue>Kidney</tissue>
        <tissue>Liver</tissue>
        <tissue>Lung</tissue>
        <tissue>Pancreas</tissue>
        <tissue>Spleen</tissue>
        <tissue>Testis</tissue>
    </source>
</reference>
<keyword id="KW-0903">Direct protein sequencing</keyword>
<keyword id="KW-0325">Glycoprotein</keyword>
<keyword id="KW-0646">Protease inhibitor</keyword>
<keyword id="KW-1185">Reference proteome</keyword>
<keyword id="KW-0964">Secreted</keyword>
<keyword id="KW-0722">Serine protease inhibitor</keyword>
<keyword id="KW-0732">Signal</keyword>
<protein>
    <recommendedName>
        <fullName>Serine protease inhibitor A3K</fullName>
        <shortName>Serpin A3K</shortName>
    </recommendedName>
    <alternativeName>
        <fullName>Contrapsin</fullName>
    </alternativeName>
    <alternativeName>
        <fullName>SPI-2</fullName>
    </alternativeName>
</protein>